<reference key="1">
    <citation type="journal article" date="1993" name="J. Biol. Chem.">
        <title>A novel CDC2-related protein kinase from Leishmania mexicana, LmmCRK1, is post-translationally regulated during the life cycle.</title>
        <authorList>
            <person name="Mottram J.C."/>
            <person name="Kinnaird J.H."/>
            <person name="Shiels B.R."/>
            <person name="Tait A."/>
            <person name="Barry J.D."/>
        </authorList>
    </citation>
    <scope>NUCLEOTIDE SEQUENCE [GENOMIC DNA]</scope>
    <source>
        <strain>MNYC/BZ/62/M379</strain>
    </source>
</reference>
<sequence length="301" mass="34473">MTSRYERQEKIGEGTYGVVYKARDTSTAATVALKRIRLDSEEEGVPCTAIREISLLKELRHENIVKLLDVCHSEHRLTIVFEYLDLDLKKYLDRENGNLDAATIQHFMRDLLRGVAFCHQRSVLHRDLKPQNLLISREKELKLGDFGLGRSFAIPVRKFTNEVVTLWYRPPDVLLGSMQYGPPVDVWSVGCIFSEMATGTPLFAGKNDADQLMRIFRFLGTPNNRVWPSMNQYPNSNNMLSQPEFLQNFEPEWSNVLGSVPGYEKLGCAGVDLLERLLRYEPSERITAADALNHPYFSLQF</sequence>
<accession>Q06309</accession>
<evidence type="ECO:0000250" key="1"/>
<evidence type="ECO:0000255" key="2">
    <source>
        <dbReference type="PROSITE-ProRule" id="PRU00159"/>
    </source>
</evidence>
<evidence type="ECO:0000255" key="3">
    <source>
        <dbReference type="PROSITE-ProRule" id="PRU10027"/>
    </source>
</evidence>
<evidence type="ECO:0000305" key="4"/>
<dbReference type="EC" id="2.7.11.23"/>
<dbReference type="EMBL" id="X60385">
    <property type="protein sequence ID" value="CAA42936.1"/>
    <property type="molecule type" value="Genomic_DNA"/>
</dbReference>
<dbReference type="PIR" id="A48041">
    <property type="entry name" value="A48041"/>
</dbReference>
<dbReference type="SMR" id="Q06309"/>
<dbReference type="VEuPathDB" id="TriTrypDB:LmxM.21.1080"/>
<dbReference type="OMA" id="PGTCLRE"/>
<dbReference type="BRENDA" id="2.7.11.22">
    <property type="organism ID" value="2951"/>
</dbReference>
<dbReference type="GO" id="GO:0005737">
    <property type="term" value="C:cytoplasm"/>
    <property type="evidence" value="ECO:0007669"/>
    <property type="project" value="TreeGrafter"/>
</dbReference>
<dbReference type="GO" id="GO:0005634">
    <property type="term" value="C:nucleus"/>
    <property type="evidence" value="ECO:0007669"/>
    <property type="project" value="TreeGrafter"/>
</dbReference>
<dbReference type="GO" id="GO:0005524">
    <property type="term" value="F:ATP binding"/>
    <property type="evidence" value="ECO:0007669"/>
    <property type="project" value="UniProtKB-KW"/>
</dbReference>
<dbReference type="GO" id="GO:0004693">
    <property type="term" value="F:cyclin-dependent protein serine/threonine kinase activity"/>
    <property type="evidence" value="ECO:0007669"/>
    <property type="project" value="TreeGrafter"/>
</dbReference>
<dbReference type="GO" id="GO:0008353">
    <property type="term" value="F:RNA polymerase II CTD heptapeptide repeat kinase activity"/>
    <property type="evidence" value="ECO:0007669"/>
    <property type="project" value="UniProtKB-EC"/>
</dbReference>
<dbReference type="CDD" id="cd07829">
    <property type="entry name" value="STKc_CDK_like"/>
    <property type="match status" value="1"/>
</dbReference>
<dbReference type="FunFam" id="1.10.510.10:FF:000524">
    <property type="entry name" value="Cell division protein kinase 2"/>
    <property type="match status" value="1"/>
</dbReference>
<dbReference type="FunFam" id="3.30.200.20:FF:000027">
    <property type="entry name" value="Putative Cyclin-dependent kinase 1"/>
    <property type="match status" value="1"/>
</dbReference>
<dbReference type="Gene3D" id="3.30.200.20">
    <property type="entry name" value="Phosphorylase Kinase, domain 1"/>
    <property type="match status" value="1"/>
</dbReference>
<dbReference type="Gene3D" id="1.10.510.10">
    <property type="entry name" value="Transferase(Phosphotransferase) domain 1"/>
    <property type="match status" value="1"/>
</dbReference>
<dbReference type="InterPro" id="IPR050108">
    <property type="entry name" value="CDK"/>
</dbReference>
<dbReference type="InterPro" id="IPR011009">
    <property type="entry name" value="Kinase-like_dom_sf"/>
</dbReference>
<dbReference type="InterPro" id="IPR000719">
    <property type="entry name" value="Prot_kinase_dom"/>
</dbReference>
<dbReference type="InterPro" id="IPR017441">
    <property type="entry name" value="Protein_kinase_ATP_BS"/>
</dbReference>
<dbReference type="InterPro" id="IPR008271">
    <property type="entry name" value="Ser/Thr_kinase_AS"/>
</dbReference>
<dbReference type="PANTHER" id="PTHR24056">
    <property type="entry name" value="CELL DIVISION PROTEIN KINASE"/>
    <property type="match status" value="1"/>
</dbReference>
<dbReference type="PANTHER" id="PTHR24056:SF46">
    <property type="entry name" value="CYCLIN-DEPENDENT KINASE 5"/>
    <property type="match status" value="1"/>
</dbReference>
<dbReference type="Pfam" id="PF00069">
    <property type="entry name" value="Pkinase"/>
    <property type="match status" value="1"/>
</dbReference>
<dbReference type="SMART" id="SM00220">
    <property type="entry name" value="S_TKc"/>
    <property type="match status" value="1"/>
</dbReference>
<dbReference type="SUPFAM" id="SSF56112">
    <property type="entry name" value="Protein kinase-like (PK-like)"/>
    <property type="match status" value="1"/>
</dbReference>
<dbReference type="PROSITE" id="PS00107">
    <property type="entry name" value="PROTEIN_KINASE_ATP"/>
    <property type="match status" value="1"/>
</dbReference>
<dbReference type="PROSITE" id="PS50011">
    <property type="entry name" value="PROTEIN_KINASE_DOM"/>
    <property type="match status" value="1"/>
</dbReference>
<dbReference type="PROSITE" id="PS00108">
    <property type="entry name" value="PROTEIN_KINASE_ST"/>
    <property type="match status" value="1"/>
</dbReference>
<feature type="chain" id="PRO_0000085878" description="Cell division protein kinase 2 homolog CRK1">
    <location>
        <begin position="1"/>
        <end position="301"/>
    </location>
</feature>
<feature type="domain" description="Protein kinase" evidence="2">
    <location>
        <begin position="5"/>
        <end position="297"/>
    </location>
</feature>
<feature type="active site" description="Proton acceptor" evidence="2 3">
    <location>
        <position position="127"/>
    </location>
</feature>
<feature type="binding site" evidence="2">
    <location>
        <begin position="11"/>
        <end position="19"/>
    </location>
    <ligand>
        <name>ATP</name>
        <dbReference type="ChEBI" id="CHEBI:30616"/>
    </ligand>
</feature>
<feature type="binding site" evidence="2">
    <location>
        <position position="34"/>
    </location>
    <ligand>
        <name>ATP</name>
        <dbReference type="ChEBI" id="CHEBI:30616"/>
    </ligand>
</feature>
<feature type="modified residue" description="Phosphothreonine; by CAK" evidence="1">
    <location>
        <position position="160"/>
    </location>
</feature>
<name>CRK1_LEIME</name>
<keyword id="KW-0067">ATP-binding</keyword>
<keyword id="KW-0418">Kinase</keyword>
<keyword id="KW-0547">Nucleotide-binding</keyword>
<keyword id="KW-0597">Phosphoprotein</keyword>
<keyword id="KW-0723">Serine/threonine-protein kinase</keyword>
<keyword id="KW-0808">Transferase</keyword>
<organism>
    <name type="scientific">Leishmania mexicana</name>
    <dbReference type="NCBI Taxonomy" id="5665"/>
    <lineage>
        <taxon>Eukaryota</taxon>
        <taxon>Discoba</taxon>
        <taxon>Euglenozoa</taxon>
        <taxon>Kinetoplastea</taxon>
        <taxon>Metakinetoplastina</taxon>
        <taxon>Trypanosomatida</taxon>
        <taxon>Trypanosomatidae</taxon>
        <taxon>Leishmaniinae</taxon>
        <taxon>Leishmania</taxon>
    </lineage>
</organism>
<comment type="function">
    <text>May be involved in some stage-specific role in the promastigote cell cycle.</text>
</comment>
<comment type="catalytic activity">
    <reaction>
        <text>[DNA-directed RNA polymerase] + ATP = phospho-[DNA-directed RNA polymerase] + ADP + H(+)</text>
        <dbReference type="Rhea" id="RHEA:10216"/>
        <dbReference type="Rhea" id="RHEA-COMP:11321"/>
        <dbReference type="Rhea" id="RHEA-COMP:11322"/>
        <dbReference type="ChEBI" id="CHEBI:15378"/>
        <dbReference type="ChEBI" id="CHEBI:30616"/>
        <dbReference type="ChEBI" id="CHEBI:43176"/>
        <dbReference type="ChEBI" id="CHEBI:68546"/>
        <dbReference type="ChEBI" id="CHEBI:456216"/>
        <dbReference type="EC" id="2.7.11.23"/>
    </reaction>
</comment>
<comment type="activity regulation">
    <text evidence="1">Phosphorylation at Thr-15 or Tyr-16 inactivates the enzyme, while phosphorylation at Thr-160 activates it.</text>
</comment>
<comment type="subunit">
    <text evidence="1">Forms a stable but non-covalent complex with a regulatory subunit and with a cyclin.</text>
</comment>
<comment type="developmental stage">
    <text>Expressed in all life cycle stages, promastigote, metacyclic and amastigote forms but is found in the active form only in the promastigote stage.</text>
</comment>
<comment type="similarity">
    <text evidence="4">Belongs to the protein kinase superfamily. CMGC Ser/Thr protein kinase family. CDC2/CDKX subfamily.</text>
</comment>
<protein>
    <recommendedName>
        <fullName>Cell division protein kinase 2 homolog CRK1</fullName>
        <ecNumber>2.7.11.23</ecNumber>
    </recommendedName>
</protein>
<proteinExistence type="evidence at transcript level"/>
<gene>
    <name type="primary">CRK1</name>
</gene>